<dbReference type="EC" id="2.5.1.-" evidence="1"/>
<dbReference type="EMBL" id="CP000764">
    <property type="protein sequence ID" value="ABS21846.1"/>
    <property type="molecule type" value="Genomic_DNA"/>
</dbReference>
<dbReference type="SMR" id="A7GNY8"/>
<dbReference type="STRING" id="315749.Bcer98_1533"/>
<dbReference type="KEGG" id="bcy:Bcer98_1533"/>
<dbReference type="eggNOG" id="COG0346">
    <property type="taxonomic scope" value="Bacteria"/>
</dbReference>
<dbReference type="HOGENOM" id="CLU_121356_0_0_9"/>
<dbReference type="Proteomes" id="UP000002300">
    <property type="component" value="Chromosome"/>
</dbReference>
<dbReference type="GO" id="GO:0005737">
    <property type="term" value="C:cytoplasm"/>
    <property type="evidence" value="ECO:0007669"/>
    <property type="project" value="UniProtKB-SubCell"/>
</dbReference>
<dbReference type="GO" id="GO:0000287">
    <property type="term" value="F:magnesium ion binding"/>
    <property type="evidence" value="ECO:0007669"/>
    <property type="project" value="UniProtKB-UniRule"/>
</dbReference>
<dbReference type="GO" id="GO:0016765">
    <property type="term" value="F:transferase activity, transferring alkyl or aryl (other than methyl) groups"/>
    <property type="evidence" value="ECO:0007669"/>
    <property type="project" value="UniProtKB-UniRule"/>
</dbReference>
<dbReference type="GO" id="GO:0046677">
    <property type="term" value="P:response to antibiotic"/>
    <property type="evidence" value="ECO:0007669"/>
    <property type="project" value="UniProtKB-UniRule"/>
</dbReference>
<dbReference type="CDD" id="cd08363">
    <property type="entry name" value="FosB"/>
    <property type="match status" value="1"/>
</dbReference>
<dbReference type="FunFam" id="3.10.180.10:FF:000015">
    <property type="entry name" value="Metallothiol transferase FosB"/>
    <property type="match status" value="1"/>
</dbReference>
<dbReference type="Gene3D" id="3.10.180.10">
    <property type="entry name" value="2,3-Dihydroxybiphenyl 1,2-Dioxygenase, domain 1"/>
    <property type="match status" value="1"/>
</dbReference>
<dbReference type="HAMAP" id="MF_01512">
    <property type="entry name" value="FosB"/>
    <property type="match status" value="1"/>
</dbReference>
<dbReference type="InterPro" id="IPR051332">
    <property type="entry name" value="Fosfomycin_Res_Enzymes"/>
</dbReference>
<dbReference type="InterPro" id="IPR029068">
    <property type="entry name" value="Glyas_Bleomycin-R_OHBP_Dase"/>
</dbReference>
<dbReference type="InterPro" id="IPR004360">
    <property type="entry name" value="Glyas_Fos-R_dOase_dom"/>
</dbReference>
<dbReference type="InterPro" id="IPR022858">
    <property type="entry name" value="Metallothiol_Trafse_FosB"/>
</dbReference>
<dbReference type="InterPro" id="IPR037523">
    <property type="entry name" value="VOC"/>
</dbReference>
<dbReference type="NCBIfam" id="NF000493">
    <property type="entry name" value="Fos_BSH"/>
    <property type="match status" value="1"/>
</dbReference>
<dbReference type="NCBIfam" id="NF003152">
    <property type="entry name" value="PRK04101.1"/>
    <property type="match status" value="1"/>
</dbReference>
<dbReference type="PANTHER" id="PTHR36113:SF6">
    <property type="entry name" value="FOSFOMYCIN RESISTANCE PROTEIN FOSX"/>
    <property type="match status" value="1"/>
</dbReference>
<dbReference type="PANTHER" id="PTHR36113">
    <property type="entry name" value="LYASE, PUTATIVE-RELATED-RELATED"/>
    <property type="match status" value="1"/>
</dbReference>
<dbReference type="Pfam" id="PF00903">
    <property type="entry name" value="Glyoxalase"/>
    <property type="match status" value="1"/>
</dbReference>
<dbReference type="SUPFAM" id="SSF54593">
    <property type="entry name" value="Glyoxalase/Bleomycin resistance protein/Dihydroxybiphenyl dioxygenase"/>
    <property type="match status" value="1"/>
</dbReference>
<dbReference type="PROSITE" id="PS51819">
    <property type="entry name" value="VOC"/>
    <property type="match status" value="1"/>
</dbReference>
<proteinExistence type="inferred from homology"/>
<evidence type="ECO:0000255" key="1">
    <source>
        <dbReference type="HAMAP-Rule" id="MF_01512"/>
    </source>
</evidence>
<evidence type="ECO:0000255" key="2">
    <source>
        <dbReference type="PROSITE-ProRule" id="PRU01163"/>
    </source>
</evidence>
<reference key="1">
    <citation type="journal article" date="2008" name="Chem. Biol. Interact.">
        <title>Extending the Bacillus cereus group genomics to putative food-borne pathogens of different toxicity.</title>
        <authorList>
            <person name="Lapidus A."/>
            <person name="Goltsman E."/>
            <person name="Auger S."/>
            <person name="Galleron N."/>
            <person name="Segurens B."/>
            <person name="Dossat C."/>
            <person name="Land M.L."/>
            <person name="Broussolle V."/>
            <person name="Brillard J."/>
            <person name="Guinebretiere M.-H."/>
            <person name="Sanchis V."/>
            <person name="Nguen-the C."/>
            <person name="Lereclus D."/>
            <person name="Richardson P."/>
            <person name="Wincker P."/>
            <person name="Weissenbach J."/>
            <person name="Ehrlich S.D."/>
            <person name="Sorokin A."/>
        </authorList>
    </citation>
    <scope>NUCLEOTIDE SEQUENCE [LARGE SCALE GENOMIC DNA]</scope>
    <source>
        <strain>DSM 22905 / CIP 110041 / 391-98 / NVH 391-98</strain>
    </source>
</reference>
<name>FOSB_BACCN</name>
<protein>
    <recommendedName>
        <fullName evidence="1">Metallothiol transferase FosB</fullName>
        <ecNumber evidence="1">2.5.1.-</ecNumber>
    </recommendedName>
    <alternativeName>
        <fullName evidence="1">Fosfomycin resistance protein</fullName>
    </alternativeName>
</protein>
<keyword id="KW-0046">Antibiotic resistance</keyword>
<keyword id="KW-0963">Cytoplasm</keyword>
<keyword id="KW-0460">Magnesium</keyword>
<keyword id="KW-0479">Metal-binding</keyword>
<keyword id="KW-0808">Transferase</keyword>
<organism>
    <name type="scientific">Bacillus cytotoxicus (strain DSM 22905 / CIP 110041 / 391-98 / NVH 391-98)</name>
    <dbReference type="NCBI Taxonomy" id="315749"/>
    <lineage>
        <taxon>Bacteria</taxon>
        <taxon>Bacillati</taxon>
        <taxon>Bacillota</taxon>
        <taxon>Bacilli</taxon>
        <taxon>Bacillales</taxon>
        <taxon>Bacillaceae</taxon>
        <taxon>Bacillus</taxon>
        <taxon>Bacillus cereus group</taxon>
    </lineage>
</organism>
<feature type="chain" id="PRO_0000383364" description="Metallothiol transferase FosB">
    <location>
        <begin position="1"/>
        <end position="139"/>
    </location>
</feature>
<feature type="domain" description="VOC" evidence="2">
    <location>
        <begin position="5"/>
        <end position="120"/>
    </location>
</feature>
<feature type="active site" description="Proton donor/acceptor" evidence="2">
    <location>
        <position position="116"/>
    </location>
</feature>
<feature type="binding site" evidence="1">
    <location>
        <position position="8"/>
    </location>
    <ligand>
        <name>Mg(2+)</name>
        <dbReference type="ChEBI" id="CHEBI:18420"/>
    </ligand>
</feature>
<feature type="binding site" evidence="1">
    <location>
        <position position="67"/>
    </location>
    <ligand>
        <name>Mg(2+)</name>
        <dbReference type="ChEBI" id="CHEBI:18420"/>
    </ligand>
</feature>
<feature type="binding site" evidence="1">
    <location>
        <position position="116"/>
    </location>
    <ligand>
        <name>Mg(2+)</name>
        <dbReference type="ChEBI" id="CHEBI:18420"/>
    </ligand>
</feature>
<gene>
    <name evidence="1" type="primary">fosB</name>
    <name type="ordered locus">Bcer98_1533</name>
</gene>
<comment type="function">
    <text evidence="1">Metallothiol transferase which confers resistance to fosfomycin by catalyzing the addition of a thiol cofactor to fosfomycin. L-cysteine is probably the physiological thiol donor.</text>
</comment>
<comment type="cofactor">
    <cofactor evidence="1">
        <name>Mg(2+)</name>
        <dbReference type="ChEBI" id="CHEBI:18420"/>
    </cofactor>
</comment>
<comment type="subunit">
    <text evidence="1">Homodimer.</text>
</comment>
<comment type="subcellular location">
    <subcellularLocation>
        <location evidence="1">Cytoplasm</location>
    </subcellularLocation>
</comment>
<comment type="similarity">
    <text evidence="1">Belongs to the fosfomycin resistance protein family. FosB subfamily.</text>
</comment>
<sequence length="139" mass="16502">MLIKGINHICFSVSNLETSIAFYEKVLEGELLVKGRKLAYFRICGTWVALNEETDIPRKEIHQSYTHIAFSIEKEDFERLLQRLKENDVHILQGRKRDVRDCKSIYFTDPDGHKFECHTGTLEERLQYYKEAKPHMTFY</sequence>
<accession>A7GNY8</accession>